<dbReference type="EMBL" id="CP000552">
    <property type="protein sequence ID" value="ABM72433.1"/>
    <property type="molecule type" value="Genomic_DNA"/>
</dbReference>
<dbReference type="RefSeq" id="WP_011820532.1">
    <property type="nucleotide sequence ID" value="NC_008817.1"/>
</dbReference>
<dbReference type="SMR" id="A2BXC2"/>
<dbReference type="STRING" id="167542.P9515_12261"/>
<dbReference type="GeneID" id="60202180"/>
<dbReference type="KEGG" id="pmc:P9515_12261"/>
<dbReference type="HOGENOM" id="CLU_135723_6_2_3"/>
<dbReference type="OrthoDB" id="9802520at2"/>
<dbReference type="Proteomes" id="UP000001589">
    <property type="component" value="Chromosome"/>
</dbReference>
<dbReference type="GO" id="GO:1990904">
    <property type="term" value="C:ribonucleoprotein complex"/>
    <property type="evidence" value="ECO:0007669"/>
    <property type="project" value="UniProtKB-KW"/>
</dbReference>
<dbReference type="GO" id="GO:0005840">
    <property type="term" value="C:ribosome"/>
    <property type="evidence" value="ECO:0007669"/>
    <property type="project" value="UniProtKB-KW"/>
</dbReference>
<dbReference type="GO" id="GO:0003735">
    <property type="term" value="F:structural constituent of ribosome"/>
    <property type="evidence" value="ECO:0007669"/>
    <property type="project" value="InterPro"/>
</dbReference>
<dbReference type="GO" id="GO:0006412">
    <property type="term" value="P:translation"/>
    <property type="evidence" value="ECO:0007669"/>
    <property type="project" value="UniProtKB-UniRule"/>
</dbReference>
<dbReference type="HAMAP" id="MF_00251">
    <property type="entry name" value="Ribosomal_bL36"/>
    <property type="match status" value="1"/>
</dbReference>
<dbReference type="InterPro" id="IPR000473">
    <property type="entry name" value="Ribosomal_bL36"/>
</dbReference>
<dbReference type="InterPro" id="IPR035977">
    <property type="entry name" value="Ribosomal_bL36_sp"/>
</dbReference>
<dbReference type="InterPro" id="IPR047621">
    <property type="entry name" value="Ribosomal_L36_bact"/>
</dbReference>
<dbReference type="NCBIfam" id="TIGR01022">
    <property type="entry name" value="rpmJ_bact"/>
    <property type="match status" value="1"/>
</dbReference>
<dbReference type="PANTHER" id="PTHR47781">
    <property type="entry name" value="50S RIBOSOMAL PROTEIN L36 2"/>
    <property type="match status" value="1"/>
</dbReference>
<dbReference type="PANTHER" id="PTHR47781:SF1">
    <property type="entry name" value="LARGE RIBOSOMAL SUBUNIT PROTEIN BL36B"/>
    <property type="match status" value="1"/>
</dbReference>
<dbReference type="Pfam" id="PF00444">
    <property type="entry name" value="Ribosomal_L36"/>
    <property type="match status" value="1"/>
</dbReference>
<dbReference type="SUPFAM" id="SSF57840">
    <property type="entry name" value="Ribosomal protein L36"/>
    <property type="match status" value="1"/>
</dbReference>
<keyword id="KW-0687">Ribonucleoprotein</keyword>
<keyword id="KW-0689">Ribosomal protein</keyword>
<proteinExistence type="inferred from homology"/>
<comment type="similarity">
    <text evidence="1">Belongs to the bacterial ribosomal protein bL36 family.</text>
</comment>
<gene>
    <name evidence="1" type="primary">rpmJ1</name>
    <name type="ordered locus">P9515_12261</name>
</gene>
<accession>A2BXC2</accession>
<name>RL361_PROM5</name>
<reference key="1">
    <citation type="journal article" date="2007" name="PLoS Genet.">
        <title>Patterns and implications of gene gain and loss in the evolution of Prochlorococcus.</title>
        <authorList>
            <person name="Kettler G.C."/>
            <person name="Martiny A.C."/>
            <person name="Huang K."/>
            <person name="Zucker J."/>
            <person name="Coleman M.L."/>
            <person name="Rodrigue S."/>
            <person name="Chen F."/>
            <person name="Lapidus A."/>
            <person name="Ferriera S."/>
            <person name="Johnson J."/>
            <person name="Steglich C."/>
            <person name="Church G.M."/>
            <person name="Richardson P."/>
            <person name="Chisholm S.W."/>
        </authorList>
    </citation>
    <scope>NUCLEOTIDE SEQUENCE [LARGE SCALE GENOMIC DNA]</scope>
    <source>
        <strain>MIT 9515</strain>
    </source>
</reference>
<protein>
    <recommendedName>
        <fullName evidence="1">Large ribosomal subunit protein bL36A</fullName>
    </recommendedName>
    <alternativeName>
        <fullName evidence="2">50S ribosomal protein L36 1</fullName>
    </alternativeName>
</protein>
<sequence>MKVRSSIKKIDQDDQIVKRRGRLYVINKKKPRNKQRQG</sequence>
<feature type="chain" id="PRO_0000344701" description="Large ribosomal subunit protein bL36A">
    <location>
        <begin position="1"/>
        <end position="38"/>
    </location>
</feature>
<organism>
    <name type="scientific">Prochlorococcus marinus (strain MIT 9515)</name>
    <dbReference type="NCBI Taxonomy" id="167542"/>
    <lineage>
        <taxon>Bacteria</taxon>
        <taxon>Bacillati</taxon>
        <taxon>Cyanobacteriota</taxon>
        <taxon>Cyanophyceae</taxon>
        <taxon>Synechococcales</taxon>
        <taxon>Prochlorococcaceae</taxon>
        <taxon>Prochlorococcus</taxon>
    </lineage>
</organism>
<evidence type="ECO:0000255" key="1">
    <source>
        <dbReference type="HAMAP-Rule" id="MF_00251"/>
    </source>
</evidence>
<evidence type="ECO:0000305" key="2"/>